<evidence type="ECO:0000255" key="1"/>
<evidence type="ECO:0000269" key="2">
    <source>
    </source>
</evidence>
<evidence type="ECO:0000269" key="3">
    <source>
    </source>
</evidence>
<evidence type="ECO:0000269" key="4">
    <source>
    </source>
</evidence>
<evidence type="ECO:0000269" key="5">
    <source>
    </source>
</evidence>
<proteinExistence type="evidence at protein level"/>
<name>LRE_ARATH</name>
<keyword id="KW-1003">Cell membrane</keyword>
<keyword id="KW-0278">Fertilization</keyword>
<keyword id="KW-0325">Glycoprotein</keyword>
<keyword id="KW-0336">GPI-anchor</keyword>
<keyword id="KW-0449">Lipoprotein</keyword>
<keyword id="KW-0472">Membrane</keyword>
<keyword id="KW-1185">Reference proteome</keyword>
<keyword id="KW-0732">Signal</keyword>
<comment type="function">
    <text evidence="2 3 4 5">Female gametophyte-specific component of the signaling pathway required for fertilization. Required for reception of the pollen tube by the female gametophyte (PubMed:19028964, PubMed:26052747, PubMed:27081182). Acts specifically at the synergid cell surface for pollen tube reception (PubMed:26052747, PubMed:27081182). Plays a role in double fertilization and early seed development (PubMed:20163554). Component of the FER-regulated Rho GTPase signaling complex. Acts as a chaperone and coreceptor for FER. Required for localization of FER to the plasma membrane (PubMed:26052747).</text>
</comment>
<comment type="subunit">
    <text evidence="4">Interacts with FER.</text>
</comment>
<comment type="interaction">
    <interactant intactId="EBI-21914693">
        <id>B3GS44</id>
    </interactant>
    <interactant intactId="EBI-17071988">
        <id>Q9FN92</id>
        <label>At5g59700</label>
    </interactant>
    <organismsDiffer>false</organismsDiffer>
    <experiments>2</experiments>
</comment>
<comment type="interaction">
    <interactant intactId="EBI-21914693">
        <id>B3GS44</id>
    </interactant>
    <interactant intactId="EBI-22028097">
        <id>Q9LX66</id>
        <label>HERK1</label>
    </interactant>
    <organismsDiffer>false</organismsDiffer>
    <experiments>2</experiments>
</comment>
<comment type="subcellular location">
    <subcellularLocation>
        <location evidence="5">Cell membrane</location>
        <topology evidence="5">Lipid-anchor</topology>
        <topology evidence="5">GPI-anchor</topology>
    </subcellularLocation>
    <text evidence="5">Localized to the filiform apparatus of the synergid cell.</text>
</comment>
<comment type="tissue specificity">
    <text evidence="2 4">Expressed in leaves, buds, flowers and stems (PubMed:19028964). Highest expression in the synergid cells of the female gametophyte (PubMed:19028964, PubMed:26052747).</text>
</comment>
<comment type="developmental stage">
    <text evidence="2 3">Expressed only in fully differentiated cells of the egg apparatus. Not detected in developing ovules undergoing megasporogenesis or megagametogenesis (PubMed:19028964). Expressed in unfertilized, mature ovules (PubMed:20163554).</text>
</comment>
<comment type="disruption phenotype">
    <text evidence="2">Failure of pollen tube arrest and fertilization. Deficient in pollen tube reception by the female gametophyte.</text>
</comment>
<organism>
    <name type="scientific">Arabidopsis thaliana</name>
    <name type="common">Mouse-ear cress</name>
    <dbReference type="NCBI Taxonomy" id="3702"/>
    <lineage>
        <taxon>Eukaryota</taxon>
        <taxon>Viridiplantae</taxon>
        <taxon>Streptophyta</taxon>
        <taxon>Embryophyta</taxon>
        <taxon>Tracheophyta</taxon>
        <taxon>Spermatophyta</taxon>
        <taxon>Magnoliopsida</taxon>
        <taxon>eudicotyledons</taxon>
        <taxon>Gunneridae</taxon>
        <taxon>Pentapetalae</taxon>
        <taxon>rosids</taxon>
        <taxon>malvids</taxon>
        <taxon>Brassicales</taxon>
        <taxon>Brassicaceae</taxon>
        <taxon>Camelineae</taxon>
        <taxon>Arabidopsis</taxon>
    </lineage>
</organism>
<reference key="1">
    <citation type="journal article" date="2008" name="Plant Cell">
        <title>Maternal control of male-gamete delivery in Arabidopsis involves a putative GPI-anchored protein encoded by the LORELEI gene.</title>
        <authorList>
            <person name="Capron A."/>
            <person name="Gourgues M."/>
            <person name="Neiva L.S."/>
            <person name="Faure J.-E."/>
            <person name="Berger F."/>
            <person name="Pagnussat G."/>
            <person name="Krishnan A."/>
            <person name="Alvarez-Mejia C."/>
            <person name="Vielle-Calzada J.-P."/>
            <person name="Lee Y.-R."/>
            <person name="Liu B."/>
            <person name="Sundaresan V."/>
        </authorList>
    </citation>
    <scope>NUCLEOTIDE SEQUENCE [MRNA]</scope>
    <scope>FUNCTION</scope>
    <scope>TISSUE SPECIFICITY</scope>
    <scope>DEVELOPMENTAL STAGE</scope>
    <scope>DISRUPTION PHENOTYPE</scope>
</reference>
<reference key="2">
    <citation type="journal article" date="1999" name="Nature">
        <title>Sequence and analysis of chromosome 4 of the plant Arabidopsis thaliana.</title>
        <authorList>
            <person name="Mayer K.F.X."/>
            <person name="Schueller C."/>
            <person name="Wambutt R."/>
            <person name="Murphy G."/>
            <person name="Volckaert G."/>
            <person name="Pohl T."/>
            <person name="Duesterhoeft A."/>
            <person name="Stiekema W."/>
            <person name="Entian K.-D."/>
            <person name="Terryn N."/>
            <person name="Harris B."/>
            <person name="Ansorge W."/>
            <person name="Brandt P."/>
            <person name="Grivell L.A."/>
            <person name="Rieger M."/>
            <person name="Weichselgartner M."/>
            <person name="de Simone V."/>
            <person name="Obermaier B."/>
            <person name="Mache R."/>
            <person name="Mueller M."/>
            <person name="Kreis M."/>
            <person name="Delseny M."/>
            <person name="Puigdomenech P."/>
            <person name="Watson M."/>
            <person name="Schmidtheini T."/>
            <person name="Reichert B."/>
            <person name="Portetelle D."/>
            <person name="Perez-Alonso M."/>
            <person name="Boutry M."/>
            <person name="Bancroft I."/>
            <person name="Vos P."/>
            <person name="Hoheisel J."/>
            <person name="Zimmermann W."/>
            <person name="Wedler H."/>
            <person name="Ridley P."/>
            <person name="Langham S.-A."/>
            <person name="McCullagh B."/>
            <person name="Bilham L."/>
            <person name="Robben J."/>
            <person name="van der Schueren J."/>
            <person name="Grymonprez B."/>
            <person name="Chuang Y.-J."/>
            <person name="Vandenbussche F."/>
            <person name="Braeken M."/>
            <person name="Weltjens I."/>
            <person name="Voet M."/>
            <person name="Bastiaens I."/>
            <person name="Aert R."/>
            <person name="Defoor E."/>
            <person name="Weitzenegger T."/>
            <person name="Bothe G."/>
            <person name="Ramsperger U."/>
            <person name="Hilbert H."/>
            <person name="Braun M."/>
            <person name="Holzer E."/>
            <person name="Brandt A."/>
            <person name="Peters S."/>
            <person name="van Staveren M."/>
            <person name="Dirkse W."/>
            <person name="Mooijman P."/>
            <person name="Klein Lankhorst R."/>
            <person name="Rose M."/>
            <person name="Hauf J."/>
            <person name="Koetter P."/>
            <person name="Berneiser S."/>
            <person name="Hempel S."/>
            <person name="Feldpausch M."/>
            <person name="Lamberth S."/>
            <person name="Van den Daele H."/>
            <person name="De Keyser A."/>
            <person name="Buysshaert C."/>
            <person name="Gielen J."/>
            <person name="Villarroel R."/>
            <person name="De Clercq R."/>
            <person name="van Montagu M."/>
            <person name="Rogers J."/>
            <person name="Cronin A."/>
            <person name="Quail M.A."/>
            <person name="Bray-Allen S."/>
            <person name="Clark L."/>
            <person name="Doggett J."/>
            <person name="Hall S."/>
            <person name="Kay M."/>
            <person name="Lennard N."/>
            <person name="McLay K."/>
            <person name="Mayes R."/>
            <person name="Pettett A."/>
            <person name="Rajandream M.A."/>
            <person name="Lyne M."/>
            <person name="Benes V."/>
            <person name="Rechmann S."/>
            <person name="Borkova D."/>
            <person name="Bloecker H."/>
            <person name="Scharfe M."/>
            <person name="Grimm M."/>
            <person name="Loehnert T.-H."/>
            <person name="Dose S."/>
            <person name="de Haan M."/>
            <person name="Maarse A.C."/>
            <person name="Schaefer M."/>
            <person name="Mueller-Auer S."/>
            <person name="Gabel C."/>
            <person name="Fuchs M."/>
            <person name="Fartmann B."/>
            <person name="Granderath K."/>
            <person name="Dauner D."/>
            <person name="Herzl A."/>
            <person name="Neumann S."/>
            <person name="Argiriou A."/>
            <person name="Vitale D."/>
            <person name="Liguori R."/>
            <person name="Piravandi E."/>
            <person name="Massenet O."/>
            <person name="Quigley F."/>
            <person name="Clabauld G."/>
            <person name="Muendlein A."/>
            <person name="Felber R."/>
            <person name="Schnabl S."/>
            <person name="Hiller R."/>
            <person name="Schmidt W."/>
            <person name="Lecharny A."/>
            <person name="Aubourg S."/>
            <person name="Chefdor F."/>
            <person name="Cooke R."/>
            <person name="Berger C."/>
            <person name="Monfort A."/>
            <person name="Casacuberta E."/>
            <person name="Gibbons T."/>
            <person name="Weber N."/>
            <person name="Vandenbol M."/>
            <person name="Bargues M."/>
            <person name="Terol J."/>
            <person name="Torres A."/>
            <person name="Perez-Perez A."/>
            <person name="Purnelle B."/>
            <person name="Bent E."/>
            <person name="Johnson S."/>
            <person name="Tacon D."/>
            <person name="Jesse T."/>
            <person name="Heijnen L."/>
            <person name="Schwarz S."/>
            <person name="Scholler P."/>
            <person name="Heber S."/>
            <person name="Francs P."/>
            <person name="Bielke C."/>
            <person name="Frishman D."/>
            <person name="Haase D."/>
            <person name="Lemcke K."/>
            <person name="Mewes H.-W."/>
            <person name="Stocker S."/>
            <person name="Zaccaria P."/>
            <person name="Bevan M."/>
            <person name="Wilson R.K."/>
            <person name="de la Bastide M."/>
            <person name="Habermann K."/>
            <person name="Parnell L."/>
            <person name="Dedhia N."/>
            <person name="Gnoj L."/>
            <person name="Schutz K."/>
            <person name="Huang E."/>
            <person name="Spiegel L."/>
            <person name="Sekhon M."/>
            <person name="Murray J."/>
            <person name="Sheet P."/>
            <person name="Cordes M."/>
            <person name="Abu-Threideh J."/>
            <person name="Stoneking T."/>
            <person name="Kalicki J."/>
            <person name="Graves T."/>
            <person name="Harmon G."/>
            <person name="Edwards J."/>
            <person name="Latreille P."/>
            <person name="Courtney L."/>
            <person name="Cloud J."/>
            <person name="Abbott A."/>
            <person name="Scott K."/>
            <person name="Johnson D."/>
            <person name="Minx P."/>
            <person name="Bentley D."/>
            <person name="Fulton B."/>
            <person name="Miller N."/>
            <person name="Greco T."/>
            <person name="Kemp K."/>
            <person name="Kramer J."/>
            <person name="Fulton L."/>
            <person name="Mardis E."/>
            <person name="Dante M."/>
            <person name="Pepin K."/>
            <person name="Hillier L.W."/>
            <person name="Nelson J."/>
            <person name="Spieth J."/>
            <person name="Ryan E."/>
            <person name="Andrews S."/>
            <person name="Geisel C."/>
            <person name="Layman D."/>
            <person name="Du H."/>
            <person name="Ali J."/>
            <person name="Berghoff A."/>
            <person name="Jones K."/>
            <person name="Drone K."/>
            <person name="Cotton M."/>
            <person name="Joshu C."/>
            <person name="Antonoiu B."/>
            <person name="Zidanic M."/>
            <person name="Strong C."/>
            <person name="Sun H."/>
            <person name="Lamar B."/>
            <person name="Yordan C."/>
            <person name="Ma P."/>
            <person name="Zhong J."/>
            <person name="Preston R."/>
            <person name="Vil D."/>
            <person name="Shekher M."/>
            <person name="Matero A."/>
            <person name="Shah R."/>
            <person name="Swaby I.K."/>
            <person name="O'Shaughnessy A."/>
            <person name="Rodriguez M."/>
            <person name="Hoffman J."/>
            <person name="Till S."/>
            <person name="Granat S."/>
            <person name="Shohdy N."/>
            <person name="Hasegawa A."/>
            <person name="Hameed A."/>
            <person name="Lodhi M."/>
            <person name="Johnson A."/>
            <person name="Chen E."/>
            <person name="Marra M.A."/>
            <person name="Martienssen R."/>
            <person name="McCombie W.R."/>
        </authorList>
    </citation>
    <scope>NUCLEOTIDE SEQUENCE [LARGE SCALE GENOMIC DNA]</scope>
    <source>
        <strain>cv. Columbia</strain>
    </source>
</reference>
<reference key="3">
    <citation type="journal article" date="2017" name="Plant J.">
        <title>Araport11: a complete reannotation of the Arabidopsis thaliana reference genome.</title>
        <authorList>
            <person name="Cheng C.Y."/>
            <person name="Krishnakumar V."/>
            <person name="Chan A.P."/>
            <person name="Thibaud-Nissen F."/>
            <person name="Schobel S."/>
            <person name="Town C.D."/>
        </authorList>
    </citation>
    <scope>GENOME REANNOTATION</scope>
    <source>
        <strain>cv. Columbia</strain>
    </source>
</reference>
<reference key="4">
    <citation type="journal article" date="2010" name="Plant J.">
        <title>A role for LORELEI, a putative glycosylphosphatidylinositol-anchored protein, in Arabidopsis thaliana double fertilization and early seed development.</title>
        <authorList>
            <person name="Tsukamoto T."/>
            <person name="Qin Y."/>
            <person name="Huang Y."/>
            <person name="Dunatunga D."/>
            <person name="Palanivelu R."/>
        </authorList>
    </citation>
    <scope>FUNCTION</scope>
    <scope>DEVELOPMENTAL STAGE</scope>
    <scope>DISRUPTION PHENOTYPE</scope>
</reference>
<reference key="5">
    <citation type="journal article" date="2015" name="Elife">
        <title>Glycosylphosphatidylinositol-anchored proteins as chaperones and co-receptors for FERONIA receptor kinase signaling in Arabidopsis.</title>
        <authorList>
            <person name="Li C."/>
            <person name="Yeh F.L."/>
            <person name="Cheung A.Y."/>
            <person name="Duan Q."/>
            <person name="Kita D."/>
            <person name="Liu M.C."/>
            <person name="Maman J."/>
            <person name="Luu E.J."/>
            <person name="Wu B.W."/>
            <person name="Gates L."/>
            <person name="Jalal M."/>
            <person name="Kwong A."/>
            <person name="Carpenter H."/>
            <person name="Wu H.M."/>
        </authorList>
    </citation>
    <scope>FUNCTION</scope>
    <scope>INTERACTION WITH FER</scope>
    <scope>TISSUE SPECIFICITY</scope>
</reference>
<reference key="6">
    <citation type="journal article" date="2016" name="Plant Cell">
        <title>The role of LORELEI in pollen tube reception at the interface of the synergid cell and pollen tube requires the modified eight-cysteine motif and the receptor-like kinase FERONIA.</title>
        <authorList>
            <person name="Liu X."/>
            <person name="Castro C."/>
            <person name="Wang Y."/>
            <person name="Noble J."/>
            <person name="Ponvert N."/>
            <person name="Bundy M."/>
            <person name="Hoel C."/>
            <person name="Shpak E."/>
            <person name="Palanivelu R."/>
        </authorList>
    </citation>
    <scope>FUNCTION</scope>
    <scope>SUBCELLULAR LOCATION</scope>
    <scope>MUTAGENESIS OF 82-PRO--ASP-93 AND 139-SER--ALA-141</scope>
</reference>
<protein>
    <recommendedName>
        <fullName>GPI-anchored protein LORELEI</fullName>
    </recommendedName>
</protein>
<dbReference type="EMBL" id="EU727071">
    <property type="protein sequence ID" value="ACD75469.1"/>
    <property type="molecule type" value="mRNA"/>
</dbReference>
<dbReference type="EMBL" id="BK006574">
    <property type="protein sequence ID" value="DAA64759.1"/>
    <property type="molecule type" value="Genomic_DNA"/>
</dbReference>
<dbReference type="EMBL" id="AL022223">
    <property type="status" value="NOT_ANNOTATED_CDS"/>
    <property type="molecule type" value="Genomic_DNA"/>
</dbReference>
<dbReference type="EMBL" id="AL161565">
    <property type="status" value="NOT_ANNOTATED_CDS"/>
    <property type="molecule type" value="Genomic_DNA"/>
</dbReference>
<dbReference type="EMBL" id="CP002687">
    <property type="protein sequence ID" value="AEE85202.1"/>
    <property type="molecule type" value="Genomic_DNA"/>
</dbReference>
<dbReference type="RefSeq" id="NP_001119062.1">
    <property type="nucleotide sequence ID" value="NM_001125590.2"/>
</dbReference>
<dbReference type="SMR" id="B3GS44"/>
<dbReference type="FunCoup" id="B3GS44">
    <property type="interactions" value="3"/>
</dbReference>
<dbReference type="IntAct" id="B3GS44">
    <property type="interactions" value="2"/>
</dbReference>
<dbReference type="STRING" id="3702.B3GS44"/>
<dbReference type="TCDB" id="1.A.130.1.1">
    <property type="family name" value="the mildew-resistance locus o (mlo) family"/>
</dbReference>
<dbReference type="GlyCosmos" id="B3GS44">
    <property type="glycosylation" value="1 site, No reported glycans"/>
</dbReference>
<dbReference type="GlyGen" id="B3GS44">
    <property type="glycosylation" value="1 site"/>
</dbReference>
<dbReference type="PaxDb" id="3702-AT4G26466.1"/>
<dbReference type="EnsemblPlants" id="AT4G26466.1">
    <property type="protein sequence ID" value="AT4G26466.1"/>
    <property type="gene ID" value="AT4G26466"/>
</dbReference>
<dbReference type="GeneID" id="6240393"/>
<dbReference type="Gramene" id="AT4G26466.1">
    <property type="protein sequence ID" value="AT4G26466.1"/>
    <property type="gene ID" value="AT4G26466"/>
</dbReference>
<dbReference type="KEGG" id="ath:AT4G26466"/>
<dbReference type="Araport" id="AT4G26466"/>
<dbReference type="TAIR" id="AT4G26466">
    <property type="gene designation" value="LRE"/>
</dbReference>
<dbReference type="eggNOG" id="ENOG502S17V">
    <property type="taxonomic scope" value="Eukaryota"/>
</dbReference>
<dbReference type="HOGENOM" id="CLU_119747_0_0_1"/>
<dbReference type="InParanoid" id="B3GS44"/>
<dbReference type="OMA" id="RCKGPAF"/>
<dbReference type="PhylomeDB" id="B3GS44"/>
<dbReference type="PRO" id="PR:B3GS44"/>
<dbReference type="Proteomes" id="UP000006548">
    <property type="component" value="Chromosome 4"/>
</dbReference>
<dbReference type="ExpressionAtlas" id="B3GS44">
    <property type="expression patterns" value="baseline and differential"/>
</dbReference>
<dbReference type="GO" id="GO:0005886">
    <property type="term" value="C:plasma membrane"/>
    <property type="evidence" value="ECO:0000314"/>
    <property type="project" value="TAIR"/>
</dbReference>
<dbReference type="GO" id="GO:0098552">
    <property type="term" value="C:side of membrane"/>
    <property type="evidence" value="ECO:0007669"/>
    <property type="project" value="UniProtKB-KW"/>
</dbReference>
<dbReference type="GO" id="GO:0009567">
    <property type="term" value="P:double fertilization forming a zygote and endosperm"/>
    <property type="evidence" value="ECO:0000315"/>
    <property type="project" value="TAIR"/>
</dbReference>
<dbReference type="GO" id="GO:0010183">
    <property type="term" value="P:pollen tube guidance"/>
    <property type="evidence" value="ECO:0000315"/>
    <property type="project" value="TAIR"/>
</dbReference>
<dbReference type="GO" id="GO:0010483">
    <property type="term" value="P:pollen tube reception"/>
    <property type="evidence" value="ECO:0000315"/>
    <property type="project" value="TAIR"/>
</dbReference>
<dbReference type="GO" id="GO:0010198">
    <property type="term" value="P:synergid death"/>
    <property type="evidence" value="ECO:0000315"/>
    <property type="project" value="TAIR"/>
</dbReference>
<dbReference type="InterPro" id="IPR039307">
    <property type="entry name" value="LORELEI-like"/>
</dbReference>
<dbReference type="PANTHER" id="PTHR31533">
    <property type="entry name" value="GPI-ANCHORED PROTEIN LLG1-RELATED-RELATED"/>
    <property type="match status" value="1"/>
</dbReference>
<dbReference type="PANTHER" id="PTHR31533:SF31">
    <property type="entry name" value="GPI-ANCHORED PROTEIN LORELEI"/>
    <property type="match status" value="1"/>
</dbReference>
<sequence length="165" mass="18337">MELILLFFFLMALLVSLSSSSSISDGVFESQTSVSGRNLRHAKKKCEVNFEYMDYKVLTKRCKGPAFPAKECCSAFKEFACPYVSQINDMNSDCAQTMFSYMNIYGNYPTGLFANECRERKDGLVCPLPPLYSHNLNASTADSTPRFISLLISAATAVFALLVLT</sequence>
<accession>B3GS44</accession>
<accession>A0A0G7ZNQ5</accession>
<feature type="signal peptide" evidence="1">
    <location>
        <begin position="1"/>
        <end position="20"/>
    </location>
</feature>
<feature type="chain" id="PRO_0000385334" description="GPI-anchored protein LORELEI">
    <location>
        <begin position="21"/>
        <end position="139"/>
    </location>
</feature>
<feature type="propeptide" id="PRO_0000385335" description="Removed in mature form" evidence="1">
    <location>
        <begin position="140"/>
        <end position="165"/>
    </location>
</feature>
<feature type="region of interest" description="Required for its function in pollen tube reception" evidence="5">
    <location>
        <begin position="82"/>
        <end position="93"/>
    </location>
</feature>
<feature type="lipid moiety-binding region" description="GPI-anchor amidated serine" evidence="1">
    <location>
        <position position="139"/>
    </location>
</feature>
<feature type="glycosylation site" description="N-linked (GlcNAc...) asparagine" evidence="1">
    <location>
        <position position="137"/>
    </location>
</feature>
<feature type="mutagenesis site" description="Loss of function in pollen tube reception." evidence="5">
    <location>
        <begin position="82"/>
        <end position="93"/>
    </location>
</feature>
<feature type="mutagenesis site" description="Loss of localization to the filiform apparatus of synergid cell." evidence="5">
    <original>STA</original>
    <variation>T</variation>
    <location>
        <begin position="139"/>
        <end position="141"/>
    </location>
</feature>
<gene>
    <name type="primary">LRE</name>
    <name type="ordered locus">At4g26466</name>
    <name type="ORF">M3E9</name>
</gene>